<gene>
    <name evidence="1" type="primary">met3</name>
    <name type="synonym">sC</name>
    <name type="ORF">AN4769</name>
</gene>
<dbReference type="EC" id="2.7.7.4" evidence="1"/>
<dbReference type="EMBL" id="X82541">
    <property type="protein sequence ID" value="CAA57891.1"/>
    <property type="molecule type" value="Genomic_DNA"/>
</dbReference>
<dbReference type="EMBL" id="AACD01000080">
    <property type="protein sequence ID" value="EAA60811.1"/>
    <property type="molecule type" value="Genomic_DNA"/>
</dbReference>
<dbReference type="EMBL" id="BN001303">
    <property type="protein sequence ID" value="CBF76824.1"/>
    <property type="molecule type" value="Genomic_DNA"/>
</dbReference>
<dbReference type="PIR" id="S55034">
    <property type="entry name" value="S55034"/>
</dbReference>
<dbReference type="RefSeq" id="XP_662373.1">
    <property type="nucleotide sequence ID" value="XM_657281.1"/>
</dbReference>
<dbReference type="SMR" id="Q12555"/>
<dbReference type="FunCoup" id="Q12555">
    <property type="interactions" value="571"/>
</dbReference>
<dbReference type="STRING" id="227321.Q12555"/>
<dbReference type="EnsemblFungi" id="CBF76824">
    <property type="protein sequence ID" value="CBF76824"/>
    <property type="gene ID" value="ANIA_04769"/>
</dbReference>
<dbReference type="KEGG" id="ani:ANIA_04769"/>
<dbReference type="VEuPathDB" id="FungiDB:AN4769"/>
<dbReference type="eggNOG" id="KOG0636">
    <property type="taxonomic scope" value="Eukaryota"/>
</dbReference>
<dbReference type="HOGENOM" id="CLU_022950_0_0_1"/>
<dbReference type="InParanoid" id="Q12555"/>
<dbReference type="OMA" id="MEMRYAG"/>
<dbReference type="OrthoDB" id="468at2759"/>
<dbReference type="UniPathway" id="UPA00140">
    <property type="reaction ID" value="UER00204"/>
</dbReference>
<dbReference type="Proteomes" id="UP000000560">
    <property type="component" value="Chromosome III"/>
</dbReference>
<dbReference type="GO" id="GO:0005737">
    <property type="term" value="C:cytoplasm"/>
    <property type="evidence" value="ECO:0007669"/>
    <property type="project" value="UniProtKB-SubCell"/>
</dbReference>
<dbReference type="GO" id="GO:0004020">
    <property type="term" value="F:adenylylsulfate kinase activity"/>
    <property type="evidence" value="ECO:0007669"/>
    <property type="project" value="InterPro"/>
</dbReference>
<dbReference type="GO" id="GO:0005524">
    <property type="term" value="F:ATP binding"/>
    <property type="evidence" value="ECO:0007669"/>
    <property type="project" value="UniProtKB-KW"/>
</dbReference>
<dbReference type="GO" id="GO:0004781">
    <property type="term" value="F:sulfate adenylyltransferase (ATP) activity"/>
    <property type="evidence" value="ECO:0000315"/>
    <property type="project" value="AspGD"/>
</dbReference>
<dbReference type="GO" id="GO:0019344">
    <property type="term" value="P:cysteine biosynthetic process"/>
    <property type="evidence" value="ECO:0007669"/>
    <property type="project" value="UniProtKB-KW"/>
</dbReference>
<dbReference type="GO" id="GO:0070814">
    <property type="term" value="P:hydrogen sulfide biosynthetic process"/>
    <property type="evidence" value="ECO:0007669"/>
    <property type="project" value="UniProtKB-UniRule"/>
</dbReference>
<dbReference type="GO" id="GO:0009086">
    <property type="term" value="P:methionine biosynthetic process"/>
    <property type="evidence" value="ECO:0007669"/>
    <property type="project" value="UniProtKB-KW"/>
</dbReference>
<dbReference type="GO" id="GO:0000103">
    <property type="term" value="P:sulfate assimilation"/>
    <property type="evidence" value="ECO:0000315"/>
    <property type="project" value="AspGD"/>
</dbReference>
<dbReference type="GO" id="GO:0019379">
    <property type="term" value="P:sulfate assimilation, phosphoadenylyl sulfate reduction by phosphoadenylyl-sulfate reductase (thioredoxin)"/>
    <property type="evidence" value="ECO:0000318"/>
    <property type="project" value="GO_Central"/>
</dbReference>
<dbReference type="CDD" id="cd02027">
    <property type="entry name" value="APSK"/>
    <property type="match status" value="1"/>
</dbReference>
<dbReference type="CDD" id="cd00517">
    <property type="entry name" value="ATPS"/>
    <property type="match status" value="1"/>
</dbReference>
<dbReference type="FunFam" id="3.10.400.10:FF:000003">
    <property type="entry name" value="Sulfate adenylyltransferase"/>
    <property type="match status" value="1"/>
</dbReference>
<dbReference type="FunFam" id="3.40.50.300:FF:000802">
    <property type="entry name" value="Sulfate adenylyltransferase"/>
    <property type="match status" value="1"/>
</dbReference>
<dbReference type="FunFam" id="3.40.50.620:FF:000052">
    <property type="entry name" value="Sulfate adenylyltransferase"/>
    <property type="match status" value="1"/>
</dbReference>
<dbReference type="Gene3D" id="3.40.50.620">
    <property type="entry name" value="HUPs"/>
    <property type="match status" value="1"/>
</dbReference>
<dbReference type="Gene3D" id="3.40.50.300">
    <property type="entry name" value="P-loop containing nucleotide triphosphate hydrolases"/>
    <property type="match status" value="1"/>
</dbReference>
<dbReference type="Gene3D" id="3.10.400.10">
    <property type="entry name" value="Sulfate adenylyltransferase"/>
    <property type="match status" value="1"/>
</dbReference>
<dbReference type="HAMAP" id="MF_03106">
    <property type="entry name" value="Sulf_adenylyltr_euk"/>
    <property type="match status" value="1"/>
</dbReference>
<dbReference type="InterPro" id="IPR002891">
    <property type="entry name" value="APS_kinase"/>
</dbReference>
<dbReference type="InterPro" id="IPR025980">
    <property type="entry name" value="ATP-Sase_PUA-like_dom"/>
</dbReference>
<dbReference type="InterPro" id="IPR027417">
    <property type="entry name" value="P-loop_NTPase"/>
</dbReference>
<dbReference type="InterPro" id="IPR015947">
    <property type="entry name" value="PUA-like_sf"/>
</dbReference>
<dbReference type="InterPro" id="IPR014729">
    <property type="entry name" value="Rossmann-like_a/b/a_fold"/>
</dbReference>
<dbReference type="InterPro" id="IPR027535">
    <property type="entry name" value="Sulf_adenylyltr_euk"/>
</dbReference>
<dbReference type="InterPro" id="IPR050512">
    <property type="entry name" value="Sulf_AdTrans/APS_kinase"/>
</dbReference>
<dbReference type="InterPro" id="IPR024951">
    <property type="entry name" value="Sulfurylase_cat_dom"/>
</dbReference>
<dbReference type="InterPro" id="IPR002650">
    <property type="entry name" value="Sulphate_adenylyltransferase"/>
</dbReference>
<dbReference type="NCBIfam" id="TIGR00455">
    <property type="entry name" value="apsK"/>
    <property type="match status" value="1"/>
</dbReference>
<dbReference type="NCBIfam" id="NF004040">
    <property type="entry name" value="PRK05537.1"/>
    <property type="match status" value="1"/>
</dbReference>
<dbReference type="NCBIfam" id="TIGR00339">
    <property type="entry name" value="sopT"/>
    <property type="match status" value="1"/>
</dbReference>
<dbReference type="PANTHER" id="PTHR42700">
    <property type="entry name" value="SULFATE ADENYLYLTRANSFERASE"/>
    <property type="match status" value="1"/>
</dbReference>
<dbReference type="PANTHER" id="PTHR42700:SF1">
    <property type="entry name" value="SULFATE ADENYLYLTRANSFERASE"/>
    <property type="match status" value="1"/>
</dbReference>
<dbReference type="Pfam" id="PF01583">
    <property type="entry name" value="APS_kinase"/>
    <property type="match status" value="1"/>
</dbReference>
<dbReference type="Pfam" id="PF01747">
    <property type="entry name" value="ATP-sulfurylase"/>
    <property type="match status" value="1"/>
</dbReference>
<dbReference type="Pfam" id="PF14306">
    <property type="entry name" value="PUA_2"/>
    <property type="match status" value="1"/>
</dbReference>
<dbReference type="SUPFAM" id="SSF52374">
    <property type="entry name" value="Nucleotidylyl transferase"/>
    <property type="match status" value="1"/>
</dbReference>
<dbReference type="SUPFAM" id="SSF52540">
    <property type="entry name" value="P-loop containing nucleoside triphosphate hydrolases"/>
    <property type="match status" value="1"/>
</dbReference>
<dbReference type="SUPFAM" id="SSF88697">
    <property type="entry name" value="PUA domain-like"/>
    <property type="match status" value="1"/>
</dbReference>
<name>MET3_EMENI</name>
<sequence length="574" mass="63923">MANTPHGGVLKDLIARDAPRHDQLEAEAATLPSIVLTERQLCDLELIMNGGFSPLEGFMNQKDYDGVVAESRLADGNLFSMPITLDASKAVIEQAGLKPGSRVTLRDFRDDRNLAILTIDDIYRPDKEKEAKLVFGGDPEHPAIKYLNTKVEEYYIGGKLEAVNKLNHYDYVGLRYTPAELRIHFDKLGWTRVVAFQTRNPMHRAHRELTVRAARARQANVLIHPVVGLTKPGDIDHFTRVRAYQALLPRYPNGMAALALLPLAMRMGGPREAVWHAIIRKNHGATHFIVGRDHAGPGKNSKGQEFYGPYDAQHAVEKYRAELGIEVVEFQQVTYLPDTDEYMPKDEVPAGTKTLDISGTELRNRLRTGAHIPEWFSYPEVVKILRESSPPRALQGFTIFLTGYMNSGKDAIARALQVTLNQQGGRSVTLLLGDTVRHELSSELGFSREDRHTNVQRIAFVAGELTRAGAAVIAAPIAPYEHSRKAAREAVQSTGGSFFLVHVNTPLEYCEATDKRGIYAKARRGEIKGFTGVDDPYEAPTNANLVVDVSKQSVRSIVHEIILMLESEGYFERL</sequence>
<feature type="chain" id="PRO_0000105950" description="Sulfate adenylyltransferase">
    <location>
        <begin position="1"/>
        <end position="574"/>
    </location>
</feature>
<feature type="region of interest" description="N-terminal" evidence="1">
    <location>
        <begin position="1"/>
        <end position="169"/>
    </location>
</feature>
<feature type="region of interest" description="Catalytic" evidence="1">
    <location>
        <begin position="170"/>
        <end position="394"/>
    </location>
</feature>
<feature type="region of interest" description="Allosteric regulation domain; adenylyl-sulfate kinase-like" evidence="1">
    <location>
        <begin position="395"/>
        <end position="574"/>
    </location>
</feature>
<feature type="active site" evidence="1">
    <location>
        <position position="198"/>
    </location>
</feature>
<feature type="active site" evidence="1">
    <location>
        <position position="199"/>
    </location>
</feature>
<feature type="active site" evidence="1">
    <location>
        <position position="200"/>
    </location>
</feature>
<feature type="binding site" evidence="1">
    <location>
        <begin position="197"/>
        <end position="200"/>
    </location>
    <ligand>
        <name>ATP</name>
        <dbReference type="ChEBI" id="CHEBI:30616"/>
    </ligand>
</feature>
<feature type="binding site" evidence="1">
    <location>
        <position position="197"/>
    </location>
    <ligand>
        <name>sulfate</name>
        <dbReference type="ChEBI" id="CHEBI:16189"/>
    </ligand>
</feature>
<feature type="binding site" evidence="1">
    <location>
        <position position="199"/>
    </location>
    <ligand>
        <name>sulfate</name>
        <dbReference type="ChEBI" id="CHEBI:16189"/>
    </ligand>
</feature>
<feature type="binding site" evidence="1">
    <location>
        <begin position="291"/>
        <end position="294"/>
    </location>
    <ligand>
        <name>ATP</name>
        <dbReference type="ChEBI" id="CHEBI:30616"/>
    </ligand>
</feature>
<feature type="binding site" evidence="1">
    <location>
        <position position="295"/>
    </location>
    <ligand>
        <name>sulfate</name>
        <dbReference type="ChEBI" id="CHEBI:16189"/>
    </ligand>
</feature>
<feature type="binding site" evidence="1">
    <location>
        <position position="333"/>
    </location>
    <ligand>
        <name>ATP</name>
        <dbReference type="ChEBI" id="CHEBI:30616"/>
    </ligand>
</feature>
<feature type="binding site" evidence="1">
    <location>
        <begin position="434"/>
        <end position="437"/>
    </location>
    <ligand>
        <name>3'-phosphoadenylyl sulfate</name>
        <dbReference type="ChEBI" id="CHEBI:58339"/>
        <note>allosteric inhibitor</note>
    </ligand>
</feature>
<feature type="binding site" evidence="1">
    <location>
        <position position="451"/>
    </location>
    <ligand>
        <name>3'-phosphoadenylyl sulfate</name>
        <dbReference type="ChEBI" id="CHEBI:58339"/>
        <note>allosteric inhibitor</note>
    </ligand>
</feature>
<feature type="binding site" evidence="1">
    <location>
        <begin position="477"/>
        <end position="478"/>
    </location>
    <ligand>
        <name>3'-phosphoadenylyl sulfate</name>
        <dbReference type="ChEBI" id="CHEBI:58339"/>
        <note>allosteric inhibitor</note>
    </ligand>
</feature>
<feature type="binding site" evidence="1">
    <location>
        <position position="516"/>
    </location>
    <ligand>
        <name>3'-phosphoadenylyl sulfate</name>
        <dbReference type="ChEBI" id="CHEBI:58339"/>
        <note>allosteric inhibitor</note>
    </ligand>
</feature>
<feature type="site" description="Transition state stabilizer" evidence="1">
    <location>
        <position position="203"/>
    </location>
</feature>
<feature type="site" description="Transition state stabilizer" evidence="1">
    <location>
        <position position="206"/>
    </location>
</feature>
<feature type="site" description="Induces change in substrate recognition on ATP binding" evidence="1">
    <location>
        <position position="330"/>
    </location>
</feature>
<reference key="1">
    <citation type="journal article" date="1995" name="Mol. Gen. Genet.">
        <title>Isolation and characterisation of genes for sulphate activation and reduction in Aspergillus nidulans: implications for evolution of an allosteric control region by gene duplication.</title>
        <authorList>
            <person name="Borges-Walmsley M.I."/>
            <person name="Turner G."/>
            <person name="Bailey A.M."/>
            <person name="Brown J."/>
            <person name="Lehmbeck J."/>
            <person name="Clausen I.G."/>
        </authorList>
    </citation>
    <scope>NUCLEOTIDE SEQUENCE [GENOMIC DNA]</scope>
</reference>
<reference key="2">
    <citation type="journal article" date="2005" name="Nature">
        <title>Sequencing of Aspergillus nidulans and comparative analysis with A. fumigatus and A. oryzae.</title>
        <authorList>
            <person name="Galagan J.E."/>
            <person name="Calvo S.E."/>
            <person name="Cuomo C."/>
            <person name="Ma L.-J."/>
            <person name="Wortman J.R."/>
            <person name="Batzoglou S."/>
            <person name="Lee S.-I."/>
            <person name="Bastuerkmen M."/>
            <person name="Spevak C.C."/>
            <person name="Clutterbuck J."/>
            <person name="Kapitonov V."/>
            <person name="Jurka J."/>
            <person name="Scazzocchio C."/>
            <person name="Farman M.L."/>
            <person name="Butler J."/>
            <person name="Purcell S."/>
            <person name="Harris S."/>
            <person name="Braus G.H."/>
            <person name="Draht O."/>
            <person name="Busch S."/>
            <person name="D'Enfert C."/>
            <person name="Bouchier C."/>
            <person name="Goldman G.H."/>
            <person name="Bell-Pedersen D."/>
            <person name="Griffiths-Jones S."/>
            <person name="Doonan J.H."/>
            <person name="Yu J."/>
            <person name="Vienken K."/>
            <person name="Pain A."/>
            <person name="Freitag M."/>
            <person name="Selker E.U."/>
            <person name="Archer D.B."/>
            <person name="Penalva M.A."/>
            <person name="Oakley B.R."/>
            <person name="Momany M."/>
            <person name="Tanaka T."/>
            <person name="Kumagai T."/>
            <person name="Asai K."/>
            <person name="Machida M."/>
            <person name="Nierman W.C."/>
            <person name="Denning D.W."/>
            <person name="Caddick M.X."/>
            <person name="Hynes M."/>
            <person name="Paoletti M."/>
            <person name="Fischer R."/>
            <person name="Miller B.L."/>
            <person name="Dyer P.S."/>
            <person name="Sachs M.S."/>
            <person name="Osmani S.A."/>
            <person name="Birren B.W."/>
        </authorList>
    </citation>
    <scope>NUCLEOTIDE SEQUENCE [LARGE SCALE GENOMIC DNA]</scope>
    <source>
        <strain>FGSC A4 / ATCC 38163 / CBS 112.46 / NRRL 194 / M139</strain>
    </source>
</reference>
<reference key="3">
    <citation type="journal article" date="2009" name="Fungal Genet. Biol.">
        <title>The 2008 update of the Aspergillus nidulans genome annotation: a community effort.</title>
        <authorList>
            <person name="Wortman J.R."/>
            <person name="Gilsenan J.M."/>
            <person name="Joardar V."/>
            <person name="Deegan J."/>
            <person name="Clutterbuck J."/>
            <person name="Andersen M.R."/>
            <person name="Archer D."/>
            <person name="Bencina M."/>
            <person name="Braus G."/>
            <person name="Coutinho P."/>
            <person name="von Dohren H."/>
            <person name="Doonan J."/>
            <person name="Driessen A.J."/>
            <person name="Durek P."/>
            <person name="Espeso E."/>
            <person name="Fekete E."/>
            <person name="Flipphi M."/>
            <person name="Estrada C.G."/>
            <person name="Geysens S."/>
            <person name="Goldman G."/>
            <person name="de Groot P.W."/>
            <person name="Hansen K."/>
            <person name="Harris S.D."/>
            <person name="Heinekamp T."/>
            <person name="Helmstaedt K."/>
            <person name="Henrissat B."/>
            <person name="Hofmann G."/>
            <person name="Homan T."/>
            <person name="Horio T."/>
            <person name="Horiuchi H."/>
            <person name="James S."/>
            <person name="Jones M."/>
            <person name="Karaffa L."/>
            <person name="Karanyi Z."/>
            <person name="Kato M."/>
            <person name="Keller N."/>
            <person name="Kelly D.E."/>
            <person name="Kiel J.A."/>
            <person name="Kim J.M."/>
            <person name="van der Klei I.J."/>
            <person name="Klis F.M."/>
            <person name="Kovalchuk A."/>
            <person name="Krasevec N."/>
            <person name="Kubicek C.P."/>
            <person name="Liu B."/>
            <person name="Maccabe A."/>
            <person name="Meyer V."/>
            <person name="Mirabito P."/>
            <person name="Miskei M."/>
            <person name="Mos M."/>
            <person name="Mullins J."/>
            <person name="Nelson D.R."/>
            <person name="Nielsen J."/>
            <person name="Oakley B.R."/>
            <person name="Osmani S.A."/>
            <person name="Pakula T."/>
            <person name="Paszewski A."/>
            <person name="Paulsen I."/>
            <person name="Pilsyk S."/>
            <person name="Pocsi I."/>
            <person name="Punt P.J."/>
            <person name="Ram A.F."/>
            <person name="Ren Q."/>
            <person name="Robellet X."/>
            <person name="Robson G."/>
            <person name="Seiboth B."/>
            <person name="van Solingen P."/>
            <person name="Specht T."/>
            <person name="Sun J."/>
            <person name="Taheri-Talesh N."/>
            <person name="Takeshita N."/>
            <person name="Ussery D."/>
            <person name="vanKuyk P.A."/>
            <person name="Visser H."/>
            <person name="van de Vondervoort P.J."/>
            <person name="de Vries R.P."/>
            <person name="Walton J."/>
            <person name="Xiang X."/>
            <person name="Xiong Y."/>
            <person name="Zeng A.P."/>
            <person name="Brandt B.W."/>
            <person name="Cornell M.J."/>
            <person name="van den Hondel C.A."/>
            <person name="Visser J."/>
            <person name="Oliver S.G."/>
            <person name="Turner G."/>
        </authorList>
    </citation>
    <scope>GENOME REANNOTATION</scope>
    <source>
        <strain>FGSC A4 / ATCC 38163 / CBS 112.46 / NRRL 194 / M139</strain>
    </source>
</reference>
<accession>Q12555</accession>
<accession>C8VAQ2</accession>
<accession>Q5B3W1</accession>
<protein>
    <recommendedName>
        <fullName evidence="1">Sulfate adenylyltransferase</fullName>
        <ecNumber evidence="1">2.7.7.4</ecNumber>
    </recommendedName>
    <alternativeName>
        <fullName evidence="1">ATP-sulfurylase</fullName>
    </alternativeName>
    <alternativeName>
        <fullName evidence="1">Sulfate adenylate transferase</fullName>
        <shortName evidence="1">SAT</shortName>
    </alternativeName>
</protein>
<keyword id="KW-0021">Allosteric enzyme</keyword>
<keyword id="KW-0028">Amino-acid biosynthesis</keyword>
<keyword id="KW-0067">ATP-binding</keyword>
<keyword id="KW-0198">Cysteine biosynthesis</keyword>
<keyword id="KW-0963">Cytoplasm</keyword>
<keyword id="KW-0486">Methionine biosynthesis</keyword>
<keyword id="KW-0547">Nucleotide-binding</keyword>
<keyword id="KW-0548">Nucleotidyltransferase</keyword>
<keyword id="KW-1185">Reference proteome</keyword>
<keyword id="KW-0808">Transferase</keyword>
<organism>
    <name type="scientific">Emericella nidulans (strain FGSC A4 / ATCC 38163 / CBS 112.46 / NRRL 194 / M139)</name>
    <name type="common">Aspergillus nidulans</name>
    <dbReference type="NCBI Taxonomy" id="227321"/>
    <lineage>
        <taxon>Eukaryota</taxon>
        <taxon>Fungi</taxon>
        <taxon>Dikarya</taxon>
        <taxon>Ascomycota</taxon>
        <taxon>Pezizomycotina</taxon>
        <taxon>Eurotiomycetes</taxon>
        <taxon>Eurotiomycetidae</taxon>
        <taxon>Eurotiales</taxon>
        <taxon>Aspergillaceae</taxon>
        <taxon>Aspergillus</taxon>
        <taxon>Aspergillus subgen. Nidulantes</taxon>
    </lineage>
</organism>
<comment type="function">
    <text evidence="1">Catalyzes the first intracellular reaction of sulfate assimilation, forming adenosine-5'-phosphosulfate (APS) from inorganic sulfate and ATP. Plays an important role in sulfate activation as a component of the biosynthesis pathway of sulfur-containing amino acids.</text>
</comment>
<comment type="catalytic activity">
    <reaction evidence="1">
        <text>sulfate + ATP + H(+) = adenosine 5'-phosphosulfate + diphosphate</text>
        <dbReference type="Rhea" id="RHEA:18133"/>
        <dbReference type="ChEBI" id="CHEBI:15378"/>
        <dbReference type="ChEBI" id="CHEBI:16189"/>
        <dbReference type="ChEBI" id="CHEBI:30616"/>
        <dbReference type="ChEBI" id="CHEBI:33019"/>
        <dbReference type="ChEBI" id="CHEBI:58243"/>
        <dbReference type="EC" id="2.7.7.4"/>
    </reaction>
</comment>
<comment type="activity regulation">
    <text evidence="1">Allosterically inhibited by 3'-phosphoadenosine 5'-phosphosulfate (PAPS).</text>
</comment>
<comment type="pathway">
    <text evidence="1">Sulfur metabolism; hydrogen sulfide biosynthesis; sulfite from sulfate: step 1/3.</text>
</comment>
<comment type="subunit">
    <text evidence="1">Homohexamer. Dimer of trimers.</text>
</comment>
<comment type="subcellular location">
    <subcellularLocation>
        <location evidence="1">Cytoplasm</location>
    </subcellularLocation>
</comment>
<comment type="domain">
    <text evidence="1">The adenylyl-sulfate kinase (APS kinase) is non-functional. It is involved in allosteric regulation by PAPS. PAPS binding induces a large rotational rearrangement of domains lowering the substrate affinity of the enzyme.</text>
</comment>
<comment type="similarity">
    <text evidence="1">In the N-terminal section; belongs to the sulfate adenylyltransferase family.</text>
</comment>
<comment type="similarity">
    <text evidence="1">In the C-terminal section; belongs to the APS kinase family.</text>
</comment>
<evidence type="ECO:0000255" key="1">
    <source>
        <dbReference type="HAMAP-Rule" id="MF_03106"/>
    </source>
</evidence>
<proteinExistence type="inferred from homology"/>